<dbReference type="EC" id="4.1.1.50" evidence="1"/>
<dbReference type="EMBL" id="CP000771">
    <property type="protein sequence ID" value="ABS61174.1"/>
    <property type="molecule type" value="Genomic_DNA"/>
</dbReference>
<dbReference type="SMR" id="A7HMP1"/>
<dbReference type="STRING" id="381764.Fnod_1327"/>
<dbReference type="KEGG" id="fno:Fnod_1327"/>
<dbReference type="eggNOG" id="COG1586">
    <property type="taxonomic scope" value="Bacteria"/>
</dbReference>
<dbReference type="HOGENOM" id="CLU_125470_2_3_0"/>
<dbReference type="OrthoDB" id="9793120at2"/>
<dbReference type="UniPathway" id="UPA00331">
    <property type="reaction ID" value="UER00451"/>
</dbReference>
<dbReference type="Proteomes" id="UP000002415">
    <property type="component" value="Chromosome"/>
</dbReference>
<dbReference type="GO" id="GO:0005829">
    <property type="term" value="C:cytosol"/>
    <property type="evidence" value="ECO:0007669"/>
    <property type="project" value="TreeGrafter"/>
</dbReference>
<dbReference type="GO" id="GO:0004014">
    <property type="term" value="F:adenosylmethionine decarboxylase activity"/>
    <property type="evidence" value="ECO:0007669"/>
    <property type="project" value="UniProtKB-UniRule"/>
</dbReference>
<dbReference type="GO" id="GO:0008295">
    <property type="term" value="P:spermidine biosynthetic process"/>
    <property type="evidence" value="ECO:0007669"/>
    <property type="project" value="UniProtKB-UniRule"/>
</dbReference>
<dbReference type="FunFam" id="3.30.160.750:FF:000004">
    <property type="entry name" value="S-adenosylmethionine decarboxylase proenzyme"/>
    <property type="match status" value="1"/>
</dbReference>
<dbReference type="FunFam" id="3.30.360.110:FF:000001">
    <property type="entry name" value="S-adenosylmethionine decarboxylase proenzyme"/>
    <property type="match status" value="1"/>
</dbReference>
<dbReference type="Gene3D" id="3.30.160.750">
    <property type="match status" value="1"/>
</dbReference>
<dbReference type="Gene3D" id="3.30.360.110">
    <property type="entry name" value="S-adenosylmethionine decarboxylase domain"/>
    <property type="match status" value="1"/>
</dbReference>
<dbReference type="HAMAP" id="MF_00464">
    <property type="entry name" value="AdoMetDC_1"/>
    <property type="match status" value="1"/>
</dbReference>
<dbReference type="InterPro" id="IPR042286">
    <property type="entry name" value="AdoMetDC_C"/>
</dbReference>
<dbReference type="InterPro" id="IPR003826">
    <property type="entry name" value="AdoMetDC_fam_prok"/>
</dbReference>
<dbReference type="InterPro" id="IPR042284">
    <property type="entry name" value="AdoMetDC_N"/>
</dbReference>
<dbReference type="InterPro" id="IPR016067">
    <property type="entry name" value="S-AdoMet_deCO2ase_core"/>
</dbReference>
<dbReference type="InterPro" id="IPR017716">
    <property type="entry name" value="S-AdoMet_deCOase_pro-enz"/>
</dbReference>
<dbReference type="NCBIfam" id="TIGR03330">
    <property type="entry name" value="SAM_DCase_Bsu"/>
    <property type="match status" value="1"/>
</dbReference>
<dbReference type="PANTHER" id="PTHR33866">
    <property type="entry name" value="S-ADENOSYLMETHIONINE DECARBOXYLASE PROENZYME"/>
    <property type="match status" value="1"/>
</dbReference>
<dbReference type="PANTHER" id="PTHR33866:SF2">
    <property type="entry name" value="S-ADENOSYLMETHIONINE DECARBOXYLASE PROENZYME"/>
    <property type="match status" value="1"/>
</dbReference>
<dbReference type="Pfam" id="PF02675">
    <property type="entry name" value="AdoMet_dc"/>
    <property type="match status" value="1"/>
</dbReference>
<dbReference type="SUPFAM" id="SSF56276">
    <property type="entry name" value="S-adenosylmethionine decarboxylase"/>
    <property type="match status" value="1"/>
</dbReference>
<organism>
    <name type="scientific">Fervidobacterium nodosum (strain ATCC 35602 / DSM 5306 / Rt17-B1)</name>
    <dbReference type="NCBI Taxonomy" id="381764"/>
    <lineage>
        <taxon>Bacteria</taxon>
        <taxon>Thermotogati</taxon>
        <taxon>Thermotogota</taxon>
        <taxon>Thermotogae</taxon>
        <taxon>Thermotogales</taxon>
        <taxon>Fervidobacteriaceae</taxon>
        <taxon>Fervidobacterium</taxon>
    </lineage>
</organism>
<sequence length="137" mass="15605">MKSLGRHIIAEFYDCDKEMLDNIDAIEFHMKQAAYETGATIVNSSFHRFLPYGVSGVVVISESHLTIHTWPEYGYAAVDLFTCGDHVDPWKAFSYLKKIFKSQRAHVVEHLRGKYDEVGIPENAPHKAVEAEMAEIF</sequence>
<feature type="chain" id="PRO_1000072388" description="S-adenosylmethionine decarboxylase beta chain" evidence="1">
    <location>
        <begin position="1"/>
        <end position="62"/>
    </location>
</feature>
<feature type="chain" id="PRO_1000072389" description="S-adenosylmethionine decarboxylase alpha chain" evidence="1">
    <location>
        <begin position="63"/>
        <end position="137"/>
    </location>
</feature>
<feature type="active site" description="Schiff-base intermediate with substrate; via pyruvic acid" evidence="1">
    <location>
        <position position="63"/>
    </location>
</feature>
<feature type="active site" description="Proton acceptor; for processing activity" evidence="1">
    <location>
        <position position="68"/>
    </location>
</feature>
<feature type="active site" description="Proton donor; for catalytic activity" evidence="1">
    <location>
        <position position="83"/>
    </location>
</feature>
<feature type="site" description="Cleavage (non-hydrolytic); by autolysis" evidence="1">
    <location>
        <begin position="62"/>
        <end position="63"/>
    </location>
</feature>
<feature type="modified residue" description="Pyruvic acid (Ser); by autocatalysis" evidence="1">
    <location>
        <position position="63"/>
    </location>
</feature>
<proteinExistence type="inferred from homology"/>
<gene>
    <name evidence="1" type="primary">speH</name>
    <name type="ordered locus">Fnod_1327</name>
</gene>
<comment type="function">
    <text evidence="1">Catalyzes the decarboxylation of S-adenosylmethionine to S-adenosylmethioninamine (dcAdoMet), the propylamine donor required for the synthesis of the polyamines spermine and spermidine from the diamine putrescine.</text>
</comment>
<comment type="catalytic activity">
    <reaction evidence="1">
        <text>S-adenosyl-L-methionine + H(+) = S-adenosyl 3-(methylsulfanyl)propylamine + CO2</text>
        <dbReference type="Rhea" id="RHEA:15981"/>
        <dbReference type="ChEBI" id="CHEBI:15378"/>
        <dbReference type="ChEBI" id="CHEBI:16526"/>
        <dbReference type="ChEBI" id="CHEBI:57443"/>
        <dbReference type="ChEBI" id="CHEBI:59789"/>
        <dbReference type="EC" id="4.1.1.50"/>
    </reaction>
</comment>
<comment type="cofactor">
    <cofactor evidence="1">
        <name>pyruvate</name>
        <dbReference type="ChEBI" id="CHEBI:15361"/>
    </cofactor>
    <text evidence="1">Binds 1 pyruvoyl group covalently per subunit.</text>
</comment>
<comment type="pathway">
    <text evidence="1">Amine and polyamine biosynthesis; S-adenosylmethioninamine biosynthesis; S-adenosylmethioninamine from S-adenosyl-L-methionine: step 1/1.</text>
</comment>
<comment type="subunit">
    <text evidence="1">Heterotetramer of two alpha and two beta chains arranged as a dimer of alpha/beta heterodimers.</text>
</comment>
<comment type="PTM">
    <text evidence="1">Is synthesized initially as an inactive proenzyme. Formation of the active enzyme involves a self-maturation process in which the active site pyruvoyl group is generated from an internal serine residue via an autocatalytic post-translational modification. Two non-identical subunits are generated from the proenzyme in this reaction, and the pyruvate is formed at the N-terminus of the alpha chain, which is derived from the carboxyl end of the proenzyme. The post-translation cleavage follows an unusual pathway, termed non-hydrolytic serinolysis, in which the side chain hydroxyl group of the serine supplies its oxygen atom to form the C-terminus of the beta chain, while the remainder of the serine residue undergoes an oxidative deamination to produce ammonia and the pyruvoyl group blocking the N-terminus of the alpha chain.</text>
</comment>
<comment type="similarity">
    <text evidence="1">Belongs to the prokaryotic AdoMetDC family. Type 1 subfamily.</text>
</comment>
<reference key="1">
    <citation type="submission" date="2007-07" db="EMBL/GenBank/DDBJ databases">
        <title>Complete sequence of Fervidobacterium nodosum Rt17-B1.</title>
        <authorList>
            <consortium name="US DOE Joint Genome Institute"/>
            <person name="Copeland A."/>
            <person name="Lucas S."/>
            <person name="Lapidus A."/>
            <person name="Barry K."/>
            <person name="Glavina del Rio T."/>
            <person name="Dalin E."/>
            <person name="Tice H."/>
            <person name="Pitluck S."/>
            <person name="Saunders E."/>
            <person name="Brettin T."/>
            <person name="Bruce D."/>
            <person name="Detter J.C."/>
            <person name="Han C."/>
            <person name="Schmutz J."/>
            <person name="Larimer F."/>
            <person name="Land M."/>
            <person name="Hauser L."/>
            <person name="Kyrpides N."/>
            <person name="Mikhailova N."/>
            <person name="Nelson K."/>
            <person name="Gogarten J.P."/>
            <person name="Noll K."/>
            <person name="Richardson P."/>
        </authorList>
    </citation>
    <scope>NUCLEOTIDE SEQUENCE [LARGE SCALE GENOMIC DNA]</scope>
    <source>
        <strain>ATCC 35602 / DSM 5306 / Rt17-B1</strain>
    </source>
</reference>
<name>SPEH_FERNB</name>
<accession>A7HMP1</accession>
<evidence type="ECO:0000255" key="1">
    <source>
        <dbReference type="HAMAP-Rule" id="MF_00464"/>
    </source>
</evidence>
<keyword id="KW-0068">Autocatalytic cleavage</keyword>
<keyword id="KW-0210">Decarboxylase</keyword>
<keyword id="KW-0456">Lyase</keyword>
<keyword id="KW-0620">Polyamine biosynthesis</keyword>
<keyword id="KW-0670">Pyruvate</keyword>
<keyword id="KW-1185">Reference proteome</keyword>
<keyword id="KW-0949">S-adenosyl-L-methionine</keyword>
<keyword id="KW-0704">Schiff base</keyword>
<keyword id="KW-0745">Spermidine biosynthesis</keyword>
<keyword id="KW-0865">Zymogen</keyword>
<protein>
    <recommendedName>
        <fullName evidence="1">S-adenosylmethionine decarboxylase proenzyme</fullName>
        <shortName evidence="1">AdoMetDC</shortName>
        <shortName evidence="1">SAMDC</shortName>
        <ecNumber evidence="1">4.1.1.50</ecNumber>
    </recommendedName>
    <component>
        <recommendedName>
            <fullName evidence="1">S-adenosylmethionine decarboxylase beta chain</fullName>
        </recommendedName>
    </component>
    <component>
        <recommendedName>
            <fullName evidence="1">S-adenosylmethionine decarboxylase alpha chain</fullName>
        </recommendedName>
    </component>
</protein>